<sequence>MDVVEVAGSWWAQEREDIIMKYEKGHRAGLPEDKGPKPFRSYNNNVDHLGIVHETELPPLTAREAKQIRREISRKSKWVDMLGDWEKYKSSRKLIDRAYKGMPMNIRGPMWSVLLNTEEMKLKNPGRYQIMKEKGKRSSEHIQRIDRDVSGTLRKHIFFRDRYGTKQRELLHILLAYEEYNPEVGYCRDLSHIAALFLLYLPEEDAFWALVQLLASERHSLQGFHSPNGGTVQGLQDQQEHVVATSQPKTMGHQDKKDLCGQCSPLGCLIRILIDGISLGLTLRLWDVYLVEGEQALMPITRIAFKVQQKRLTKTSRCGPWARFCNRFVDTWARDEDTVLKHLRASMKKLTRKKGDLPPPAKPEQGSSASRPVPASRGGKTLCKGDRQAPPGPPARFPRPIWSASPPRAPRSSTPCPGGAVREDTYPVGTQGVPSPALAQGGPQGSWRFLQWNSMPRLPTDLDVEGPWFRHYDFRQSCWVRAISQEDQLAPCWQAEHPAERVRSAFAAPSTDSDQGTPFRARDEQQCAPTSGPCLCGLHLESSQFPPGF</sequence>
<accession>Q8IZP1</accession>
<accession>A6NGX2</accession>
<accession>A8K007</accession>
<accession>Q6DCB4</accession>
<accession>Q9H0B9</accession>
<accession>Q9UDD4</accession>
<feature type="chain" id="PRO_0000208025" description="TBC1 domain family member 3">
    <location>
        <begin position="1"/>
        <end position="549"/>
    </location>
</feature>
<feature type="domain" description="Rab-GAP TBC" evidence="1">
    <location>
        <begin position="101"/>
        <end position="293"/>
    </location>
</feature>
<feature type="region of interest" description="Disordered" evidence="2">
    <location>
        <begin position="350"/>
        <end position="419"/>
    </location>
</feature>
<feature type="compositionally biased region" description="Low complexity" evidence="2">
    <location>
        <begin position="398"/>
        <end position="417"/>
    </location>
</feature>
<feature type="lipid moiety-binding region" description="S-palmitoyl cysteine" evidence="6">
    <location>
        <position position="318"/>
    </location>
</feature>
<feature type="lipid moiety-binding region" description="S-palmitoyl cysteine" evidence="6">
    <location>
        <position position="325"/>
    </location>
</feature>
<feature type="splice variant" id="VSP_056829" description="In isoform 2." evidence="7">
    <original>DKKDLCGQCSPLGCLIRILIDGISLGLTLRLWDVYLV</original>
    <variation>SASRRRPGVARGHVFATGSLIPGPGMRTLCSSILGPL</variation>
    <location>
        <begin position="255"/>
        <end position="291"/>
    </location>
</feature>
<feature type="splice variant" id="VSP_056830" description="In isoform 2." evidence="7">
    <location>
        <begin position="292"/>
        <end position="549"/>
    </location>
</feature>
<feature type="sequence variant" id="VAR_063088" description="In dbSNP:rs1567681955." evidence="3 5">
    <original>Q</original>
    <variation>P</variation>
    <location>
        <position position="526"/>
    </location>
</feature>
<feature type="sequence conflict" description="In Ref. 1; AAN33117." evidence="8" ref="1">
    <original>T</original>
    <variation>I</variation>
    <location>
        <position position="117"/>
    </location>
</feature>
<feature type="sequence conflict" description="In Ref. 5; AAH78140." evidence="8" ref="5">
    <original>L</original>
    <variation>M</variation>
    <location>
        <position position="122"/>
    </location>
</feature>
<feature type="sequence conflict" description="In Ref. 2; CAB66794 and 3; BAF82061." evidence="8" ref="2 3">
    <original>R</original>
    <variation>K</variation>
    <location>
        <position position="137"/>
    </location>
</feature>
<feature type="sequence conflict" description="In Ref. 3; BAF82061." evidence="8" ref="3">
    <original>KGDLP</original>
    <variation>QGDLQ</variation>
    <location>
        <begin position="354"/>
        <end position="358"/>
    </location>
</feature>
<feature type="sequence conflict" description="In Ref. 1; AAN33117." evidence="8" ref="1">
    <original>K</original>
    <variation>Q</variation>
    <location>
        <position position="354"/>
    </location>
</feature>
<name>TBC3A_HUMAN</name>
<organism>
    <name type="scientific">Homo sapiens</name>
    <name type="common">Human</name>
    <dbReference type="NCBI Taxonomy" id="9606"/>
    <lineage>
        <taxon>Eukaryota</taxon>
        <taxon>Metazoa</taxon>
        <taxon>Chordata</taxon>
        <taxon>Craniata</taxon>
        <taxon>Vertebrata</taxon>
        <taxon>Euteleostomi</taxon>
        <taxon>Mammalia</taxon>
        <taxon>Eutheria</taxon>
        <taxon>Euarchontoglires</taxon>
        <taxon>Primates</taxon>
        <taxon>Haplorrhini</taxon>
        <taxon>Catarrhini</taxon>
        <taxon>Hominidae</taxon>
        <taxon>Homo</taxon>
    </lineage>
</organism>
<proteinExistence type="evidence at protein level"/>
<evidence type="ECO:0000255" key="1">
    <source>
        <dbReference type="PROSITE-ProRule" id="PRU00163"/>
    </source>
</evidence>
<evidence type="ECO:0000256" key="2">
    <source>
        <dbReference type="SAM" id="MobiDB-lite"/>
    </source>
</evidence>
<evidence type="ECO:0000269" key="3">
    <source>
    </source>
</evidence>
<evidence type="ECO:0000269" key="4">
    <source>
    </source>
</evidence>
<evidence type="ECO:0000269" key="5">
    <source>
    </source>
</evidence>
<evidence type="ECO:0000269" key="6">
    <source>
    </source>
</evidence>
<evidence type="ECO:0000303" key="7">
    <source>
    </source>
</evidence>
<evidence type="ECO:0000305" key="8"/>
<keyword id="KW-0025">Alternative splicing</keyword>
<keyword id="KW-1003">Cell membrane</keyword>
<keyword id="KW-0343">GTPase activation</keyword>
<keyword id="KW-0449">Lipoprotein</keyword>
<keyword id="KW-0472">Membrane</keyword>
<keyword id="KW-0564">Palmitate</keyword>
<keyword id="KW-0656">Proto-oncogene</keyword>
<keyword id="KW-1185">Reference proteome</keyword>
<keyword id="KW-0832">Ubl conjugation</keyword>
<reference key="1">
    <citation type="journal article" date="2002" name="Cancer Res.">
        <title>PRC17, a novel oncogene encoding a Rab GTPase-activating protein, is amplified in prostate cancer.</title>
        <authorList>
            <person name="Pei L."/>
            <person name="Peng Y."/>
            <person name="Yang Y."/>
            <person name="Ling X.B."/>
            <person name="Van Eyndhoven W.G."/>
            <person name="Nguyen K.C."/>
            <person name="Rubin M."/>
            <person name="Hoey T."/>
            <person name="Powers S."/>
            <person name="Li J."/>
        </authorList>
    </citation>
    <scope>NUCLEOTIDE SEQUENCE [MRNA] (ISOFORM 1)</scope>
    <scope>FUNCTION</scope>
    <scope>TISSUE SPECIFICITY</scope>
    <scope>VARIANT PRO-526</scope>
</reference>
<reference key="2">
    <citation type="journal article" date="2001" name="Genome Res.">
        <title>Towards a catalog of human genes and proteins: sequencing and analysis of 500 novel complete protein coding human cDNAs.</title>
        <authorList>
            <person name="Wiemann S."/>
            <person name="Weil B."/>
            <person name="Wellenreuther R."/>
            <person name="Gassenhuber J."/>
            <person name="Glassl S."/>
            <person name="Ansorge W."/>
            <person name="Boecher M."/>
            <person name="Bloecker H."/>
            <person name="Bauersachs S."/>
            <person name="Blum H."/>
            <person name="Lauber J."/>
            <person name="Duesterhoeft A."/>
            <person name="Beyer A."/>
            <person name="Koehrer K."/>
            <person name="Strack N."/>
            <person name="Mewes H.-W."/>
            <person name="Ottenwaelder B."/>
            <person name="Obermaier B."/>
            <person name="Tampe J."/>
            <person name="Heubner D."/>
            <person name="Wambutt R."/>
            <person name="Korn B."/>
            <person name="Klein M."/>
            <person name="Poustka A."/>
        </authorList>
    </citation>
    <scope>NUCLEOTIDE SEQUENCE [LARGE SCALE MRNA] (ISOFORM 1)</scope>
    <source>
        <tissue>Testis</tissue>
    </source>
</reference>
<reference key="3">
    <citation type="journal article" date="2004" name="Nat. Genet.">
        <title>Complete sequencing and characterization of 21,243 full-length human cDNAs.</title>
        <authorList>
            <person name="Ota T."/>
            <person name="Suzuki Y."/>
            <person name="Nishikawa T."/>
            <person name="Otsuki T."/>
            <person name="Sugiyama T."/>
            <person name="Irie R."/>
            <person name="Wakamatsu A."/>
            <person name="Hayashi K."/>
            <person name="Sato H."/>
            <person name="Nagai K."/>
            <person name="Kimura K."/>
            <person name="Makita H."/>
            <person name="Sekine M."/>
            <person name="Obayashi M."/>
            <person name="Nishi T."/>
            <person name="Shibahara T."/>
            <person name="Tanaka T."/>
            <person name="Ishii S."/>
            <person name="Yamamoto J."/>
            <person name="Saito K."/>
            <person name="Kawai Y."/>
            <person name="Isono Y."/>
            <person name="Nakamura Y."/>
            <person name="Nagahari K."/>
            <person name="Murakami K."/>
            <person name="Yasuda T."/>
            <person name="Iwayanagi T."/>
            <person name="Wagatsuma M."/>
            <person name="Shiratori A."/>
            <person name="Sudo H."/>
            <person name="Hosoiri T."/>
            <person name="Kaku Y."/>
            <person name="Kodaira H."/>
            <person name="Kondo H."/>
            <person name="Sugawara M."/>
            <person name="Takahashi M."/>
            <person name="Kanda K."/>
            <person name="Yokoi T."/>
            <person name="Furuya T."/>
            <person name="Kikkawa E."/>
            <person name="Omura Y."/>
            <person name="Abe K."/>
            <person name="Kamihara K."/>
            <person name="Katsuta N."/>
            <person name="Sato K."/>
            <person name="Tanikawa M."/>
            <person name="Yamazaki M."/>
            <person name="Ninomiya K."/>
            <person name="Ishibashi T."/>
            <person name="Yamashita H."/>
            <person name="Murakawa K."/>
            <person name="Fujimori K."/>
            <person name="Tanai H."/>
            <person name="Kimata M."/>
            <person name="Watanabe M."/>
            <person name="Hiraoka S."/>
            <person name="Chiba Y."/>
            <person name="Ishida S."/>
            <person name="Ono Y."/>
            <person name="Takiguchi S."/>
            <person name="Watanabe S."/>
            <person name="Yosida M."/>
            <person name="Hotuta T."/>
            <person name="Kusano J."/>
            <person name="Kanehori K."/>
            <person name="Takahashi-Fujii A."/>
            <person name="Hara H."/>
            <person name="Tanase T.-O."/>
            <person name="Nomura Y."/>
            <person name="Togiya S."/>
            <person name="Komai F."/>
            <person name="Hara R."/>
            <person name="Takeuchi K."/>
            <person name="Arita M."/>
            <person name="Imose N."/>
            <person name="Musashino K."/>
            <person name="Yuuki H."/>
            <person name="Oshima A."/>
            <person name="Sasaki N."/>
            <person name="Aotsuka S."/>
            <person name="Yoshikawa Y."/>
            <person name="Matsunawa H."/>
            <person name="Ichihara T."/>
            <person name="Shiohata N."/>
            <person name="Sano S."/>
            <person name="Moriya S."/>
            <person name="Momiyama H."/>
            <person name="Satoh N."/>
            <person name="Takami S."/>
            <person name="Terashima Y."/>
            <person name="Suzuki O."/>
            <person name="Nakagawa S."/>
            <person name="Senoh A."/>
            <person name="Mizoguchi H."/>
            <person name="Goto Y."/>
            <person name="Shimizu F."/>
            <person name="Wakebe H."/>
            <person name="Hishigaki H."/>
            <person name="Watanabe T."/>
            <person name="Sugiyama A."/>
            <person name="Takemoto M."/>
            <person name="Kawakami B."/>
            <person name="Yamazaki M."/>
            <person name="Watanabe K."/>
            <person name="Kumagai A."/>
            <person name="Itakura S."/>
            <person name="Fukuzumi Y."/>
            <person name="Fujimori Y."/>
            <person name="Komiyama M."/>
            <person name="Tashiro H."/>
            <person name="Tanigami A."/>
            <person name="Fujiwara T."/>
            <person name="Ono T."/>
            <person name="Yamada K."/>
            <person name="Fujii Y."/>
            <person name="Ozaki K."/>
            <person name="Hirao M."/>
            <person name="Ohmori Y."/>
            <person name="Kawabata A."/>
            <person name="Hikiji T."/>
            <person name="Kobatake N."/>
            <person name="Inagaki H."/>
            <person name="Ikema Y."/>
            <person name="Okamoto S."/>
            <person name="Okitani R."/>
            <person name="Kawakami T."/>
            <person name="Noguchi S."/>
            <person name="Itoh T."/>
            <person name="Shigeta K."/>
            <person name="Senba T."/>
            <person name="Matsumura K."/>
            <person name="Nakajima Y."/>
            <person name="Mizuno T."/>
            <person name="Morinaga M."/>
            <person name="Sasaki M."/>
            <person name="Togashi T."/>
            <person name="Oyama M."/>
            <person name="Hata H."/>
            <person name="Watanabe M."/>
            <person name="Komatsu T."/>
            <person name="Mizushima-Sugano J."/>
            <person name="Satoh T."/>
            <person name="Shirai Y."/>
            <person name="Takahashi Y."/>
            <person name="Nakagawa K."/>
            <person name="Okumura K."/>
            <person name="Nagase T."/>
            <person name="Nomura N."/>
            <person name="Kikuchi H."/>
            <person name="Masuho Y."/>
            <person name="Yamashita R."/>
            <person name="Nakai K."/>
            <person name="Yada T."/>
            <person name="Nakamura Y."/>
            <person name="Ohara O."/>
            <person name="Isogai T."/>
            <person name="Sugano S."/>
        </authorList>
    </citation>
    <scope>NUCLEOTIDE SEQUENCE [LARGE SCALE MRNA] (ISOFORM 1)</scope>
    <scope>VARIANT PRO-526</scope>
    <source>
        <tissue>Adipose tissue</tissue>
    </source>
</reference>
<reference key="4">
    <citation type="journal article" date="2006" name="Nature">
        <title>DNA sequence of human chromosome 17 and analysis of rearrangement in the human lineage.</title>
        <authorList>
            <person name="Zody M.C."/>
            <person name="Garber M."/>
            <person name="Adams D.J."/>
            <person name="Sharpe T."/>
            <person name="Harrow J."/>
            <person name="Lupski J.R."/>
            <person name="Nicholson C."/>
            <person name="Searle S.M."/>
            <person name="Wilming L."/>
            <person name="Young S.K."/>
            <person name="Abouelleil A."/>
            <person name="Allen N.R."/>
            <person name="Bi W."/>
            <person name="Bloom T."/>
            <person name="Borowsky M.L."/>
            <person name="Bugalter B.E."/>
            <person name="Butler J."/>
            <person name="Chang J.L."/>
            <person name="Chen C.-K."/>
            <person name="Cook A."/>
            <person name="Corum B."/>
            <person name="Cuomo C.A."/>
            <person name="de Jong P.J."/>
            <person name="DeCaprio D."/>
            <person name="Dewar K."/>
            <person name="FitzGerald M."/>
            <person name="Gilbert J."/>
            <person name="Gibson R."/>
            <person name="Gnerre S."/>
            <person name="Goldstein S."/>
            <person name="Grafham D.V."/>
            <person name="Grocock R."/>
            <person name="Hafez N."/>
            <person name="Hagopian D.S."/>
            <person name="Hart E."/>
            <person name="Norman C.H."/>
            <person name="Humphray S."/>
            <person name="Jaffe D.B."/>
            <person name="Jones M."/>
            <person name="Kamal M."/>
            <person name="Khodiyar V.K."/>
            <person name="LaButti K."/>
            <person name="Laird G."/>
            <person name="Lehoczky J."/>
            <person name="Liu X."/>
            <person name="Lokyitsang T."/>
            <person name="Loveland J."/>
            <person name="Lui A."/>
            <person name="Macdonald P."/>
            <person name="Major J.E."/>
            <person name="Matthews L."/>
            <person name="Mauceli E."/>
            <person name="McCarroll S.A."/>
            <person name="Mihalev A.H."/>
            <person name="Mudge J."/>
            <person name="Nguyen C."/>
            <person name="Nicol R."/>
            <person name="O'Leary S.B."/>
            <person name="Osoegawa K."/>
            <person name="Schwartz D.C."/>
            <person name="Shaw-Smith C."/>
            <person name="Stankiewicz P."/>
            <person name="Steward C."/>
            <person name="Swarbreck D."/>
            <person name="Venkataraman V."/>
            <person name="Whittaker C.A."/>
            <person name="Yang X."/>
            <person name="Zimmer A.R."/>
            <person name="Bradley A."/>
            <person name="Hubbard T."/>
            <person name="Birren B.W."/>
            <person name="Rogers J."/>
            <person name="Lander E.S."/>
            <person name="Nusbaum C."/>
        </authorList>
    </citation>
    <scope>NUCLEOTIDE SEQUENCE [LARGE SCALE GENOMIC DNA]</scope>
</reference>
<reference key="5">
    <citation type="journal article" date="2004" name="Genome Res.">
        <title>The status, quality, and expansion of the NIH full-length cDNA project: the Mammalian Gene Collection (MGC).</title>
        <authorList>
            <consortium name="The MGC Project Team"/>
        </authorList>
    </citation>
    <scope>NUCLEOTIDE SEQUENCE [LARGE SCALE MRNA] (ISOFORM 2)</scope>
    <source>
        <tissue>Brain</tissue>
    </source>
</reference>
<reference key="6">
    <citation type="journal article" date="1993" name="DNA Cell Biol.">
        <title>Human TRE17 oncogene is generated from a family of homologous polymorphic sequences by single-base changes.</title>
        <authorList>
            <person name="Onno M."/>
            <person name="Nakamura T."/>
            <person name="Mariage-Samson R."/>
            <person name="Hillova J."/>
            <person name="Hill M."/>
        </authorList>
    </citation>
    <scope>NUCLEOTIDE SEQUENCE [GENOMIC DNA] OF 1-52</scope>
</reference>
<reference key="7">
    <citation type="journal article" date="1993" name="Gene">
        <title>Identification of novel sequences in the repertoire of hypervariable TRE17 genes from immortalized nonmalignant and malignant human keratinocytes.</title>
        <authorList>
            <person name="Onno M."/>
            <person name="Nakamura T."/>
            <person name="Hillova J."/>
            <person name="Hill M."/>
        </authorList>
    </citation>
    <scope>NUCLEOTIDE SEQUENCE [GENOMIC DNA] OF 1-52</scope>
    <source>
        <tissue>Placenta</tissue>
    </source>
</reference>
<reference key="8">
    <citation type="journal article" date="2003" name="Proc. Natl. Acad. Sci. U.S.A.">
        <title>The Tre2 (USP6) oncogene is a hominoid-specific gene.</title>
        <authorList>
            <person name="Paulding C.A."/>
            <person name="Ruvolo M."/>
            <person name="Haber D.A."/>
        </authorList>
    </citation>
    <scope>TISSUE SPECIFICITY</scope>
</reference>
<reference key="9">
    <citation type="journal article" date="2010" name="Science">
        <title>Diversity of human copy number variation and multicopy genes.</title>
        <authorList>
            <person name="Sudmant P.H."/>
            <person name="Kitzman J.O."/>
            <person name="Antonacci F."/>
            <person name="Alkan C."/>
            <person name="Malig M."/>
            <person name="Tsalenko A."/>
            <person name="Sampas N."/>
            <person name="Bruhn L."/>
            <person name="Shendure J."/>
            <person name="Eichler E.E."/>
        </authorList>
    </citation>
    <scope>MISCELLANEOUS</scope>
    <scope>COPY NUMBER VARIATION</scope>
</reference>
<reference key="10">
    <citation type="journal article" date="2013" name="Biochem. Biophys. Res. Commun.">
        <title>Ubiquitination and degradation of the hominoid-specific oncoprotein TBC1D3 is regulated by protein palmitoylation.</title>
        <authorList>
            <person name="Kong C."/>
            <person name="Lange J.J."/>
            <person name="Samovski D."/>
            <person name="Su X."/>
            <person name="Liu J."/>
            <person name="Sundaresan S."/>
            <person name="Stahl P.D."/>
        </authorList>
    </citation>
    <scope>PALMITOYLATION AT CYS-318 AND CYS-325</scope>
    <scope>UBIQUITINATION</scope>
    <scope>SUBCELLULAR LOCATION</scope>
</reference>
<gene>
    <name type="primary">TBC1D3</name>
    <name type="synonym">PRC17</name>
    <name type="synonym">TBC1D3A</name>
</gene>
<dbReference type="EMBL" id="AF540953">
    <property type="protein sequence ID" value="AAN33117.1"/>
    <property type="molecule type" value="mRNA"/>
</dbReference>
<dbReference type="EMBL" id="AL136860">
    <property type="protein sequence ID" value="CAB66794.1"/>
    <property type="molecule type" value="mRNA"/>
</dbReference>
<dbReference type="EMBL" id="AK289372">
    <property type="protein sequence ID" value="BAF82061.1"/>
    <property type="molecule type" value="mRNA"/>
</dbReference>
<dbReference type="EMBL" id="AC244154">
    <property type="status" value="NOT_ANNOTATED_CDS"/>
    <property type="molecule type" value="Genomic_DNA"/>
</dbReference>
<dbReference type="EMBL" id="BC078140">
    <property type="protein sequence ID" value="AAH78140.1"/>
    <property type="molecule type" value="mRNA"/>
</dbReference>
<dbReference type="EMBL" id="X71377">
    <property type="protein sequence ID" value="CAB94197.1"/>
    <property type="molecule type" value="Genomic_DNA"/>
</dbReference>
<dbReference type="CCDS" id="CCDS45658.1">
    <molecule id="Q8IZP1-1"/>
</dbReference>
<dbReference type="RefSeq" id="NP_001001418.5">
    <molecule id="Q8IZP1-1"/>
    <property type="nucleotide sequence ID" value="NM_001001418.6"/>
</dbReference>
<dbReference type="RefSeq" id="NP_001116863.3">
    <molecule id="Q8IZP1-1"/>
    <property type="nucleotide sequence ID" value="NM_001123391.4"/>
</dbReference>
<dbReference type="SMR" id="Q8IZP1"/>
<dbReference type="FunCoup" id="Q8IZP1">
    <property type="interactions" value="62"/>
</dbReference>
<dbReference type="IntAct" id="Q8IZP1">
    <property type="interactions" value="3"/>
</dbReference>
<dbReference type="STRING" id="9606.ENSP00000478683"/>
<dbReference type="GlyGen" id="Q8IZP1">
    <property type="glycosylation" value="1 site, 1 O-linked glycan (1 site)"/>
</dbReference>
<dbReference type="iPTMnet" id="Q8IZP1"/>
<dbReference type="PhosphoSitePlus" id="Q8IZP1"/>
<dbReference type="SwissPalm" id="Q8IZP1"/>
<dbReference type="BioMuta" id="TBC1D3"/>
<dbReference type="DMDM" id="294862542"/>
<dbReference type="jPOST" id="Q8IZP1"/>
<dbReference type="MassIVE" id="Q8IZP1"/>
<dbReference type="PaxDb" id="9606-ENSP00000478683"/>
<dbReference type="PeptideAtlas" id="Q8IZP1"/>
<dbReference type="Antibodypedia" id="75940">
    <property type="antibodies" value="28 antibodies from 12 providers"/>
</dbReference>
<dbReference type="DNASU" id="414059"/>
<dbReference type="Ensembl" id="ENST00000620215.3">
    <molecule id="Q8IZP1-1"/>
    <property type="protein sequence ID" value="ENSP00000478683.1"/>
    <property type="gene ID" value="ENSG00000274611.4"/>
</dbReference>
<dbReference type="GeneID" id="414060"/>
<dbReference type="GeneID" id="729873"/>
<dbReference type="KEGG" id="hsa:414060"/>
<dbReference type="KEGG" id="hsa:729873"/>
<dbReference type="MANE-Select" id="ENST00000620215.3">
    <property type="protein sequence ID" value="ENSP00000478683.1"/>
    <property type="RefSeq nucleotide sequence ID" value="NM_001123391.4"/>
    <property type="RefSeq protein sequence ID" value="NP_001116863.3"/>
</dbReference>
<dbReference type="UCSC" id="uc032ffp.2">
    <molecule id="Q8IZP1-1"/>
    <property type="organism name" value="human"/>
</dbReference>
<dbReference type="AGR" id="HGNC:19031"/>
<dbReference type="AGR" id="HGNC:24889"/>
<dbReference type="CTD" id="414060"/>
<dbReference type="CTD" id="729873"/>
<dbReference type="DisGeNET" id="414060"/>
<dbReference type="DisGeNET" id="729873"/>
<dbReference type="GeneCards" id="TBC1D3"/>
<dbReference type="HGNC" id="HGNC:19031">
    <property type="gene designation" value="TBC1D3"/>
</dbReference>
<dbReference type="HPA" id="ENSG00000274611">
    <property type="expression patterns" value="Tissue enhanced (choroid)"/>
</dbReference>
<dbReference type="MIM" id="607741">
    <property type="type" value="gene"/>
</dbReference>
<dbReference type="neXtProt" id="NX_Q8IZP1"/>
<dbReference type="OpenTargets" id="ENSG00000274611"/>
<dbReference type="PharmGKB" id="PA134941179"/>
<dbReference type="VEuPathDB" id="HostDB:ENSG00000274611"/>
<dbReference type="eggNOG" id="KOG1102">
    <property type="taxonomic scope" value="Eukaryota"/>
</dbReference>
<dbReference type="GeneTree" id="ENSGT00940000163624"/>
<dbReference type="HOGENOM" id="CLU_005350_10_5_1"/>
<dbReference type="InParanoid" id="Q8IZP1"/>
<dbReference type="OrthoDB" id="9535050at2759"/>
<dbReference type="PAN-GO" id="Q8IZP1">
    <property type="GO annotations" value="2 GO annotations based on evolutionary models"/>
</dbReference>
<dbReference type="TreeFam" id="TF318099"/>
<dbReference type="PathwayCommons" id="Q8IZP1"/>
<dbReference type="Reactome" id="R-HSA-8854214">
    <property type="pathway name" value="TBC/RABGAPs"/>
</dbReference>
<dbReference type="SignaLink" id="Q8IZP1"/>
<dbReference type="BioGRID-ORCS" id="414060">
    <property type="hits" value="392 hits in 575 CRISPR screens"/>
</dbReference>
<dbReference type="BioGRID-ORCS" id="729873">
    <property type="hits" value="42 hits in 613 CRISPR screens"/>
</dbReference>
<dbReference type="Pharos" id="Q8IZP1">
    <property type="development level" value="Tdark"/>
</dbReference>
<dbReference type="PRO" id="PR:Q8IZP1"/>
<dbReference type="Proteomes" id="UP000005640">
    <property type="component" value="Chromosome 17"/>
</dbReference>
<dbReference type="RNAct" id="Q8IZP1">
    <property type="molecule type" value="protein"/>
</dbReference>
<dbReference type="Bgee" id="ENSG00000274611">
    <property type="expression patterns" value="Expressed in mucosa of stomach and 85 other cell types or tissues"/>
</dbReference>
<dbReference type="GO" id="GO:0031901">
    <property type="term" value="C:early endosome membrane"/>
    <property type="evidence" value="ECO:0000304"/>
    <property type="project" value="Reactome"/>
</dbReference>
<dbReference type="GO" id="GO:0005886">
    <property type="term" value="C:plasma membrane"/>
    <property type="evidence" value="ECO:0007669"/>
    <property type="project" value="UniProtKB-SubCell"/>
</dbReference>
<dbReference type="GO" id="GO:0005096">
    <property type="term" value="F:GTPase activator activity"/>
    <property type="evidence" value="ECO:0000318"/>
    <property type="project" value="GO_Central"/>
</dbReference>
<dbReference type="FunFam" id="1.10.10.750:FF:000001">
    <property type="entry name" value="TBC1 domain family member 10A"/>
    <property type="match status" value="1"/>
</dbReference>
<dbReference type="FunFam" id="1.10.8.270:FF:000016">
    <property type="entry name" value="TBC1 domain family member 2A"/>
    <property type="match status" value="1"/>
</dbReference>
<dbReference type="FunFam" id="1.10.472.80:FF:000058">
    <property type="entry name" value="Ubiquitin specific peptidase 6"/>
    <property type="match status" value="1"/>
</dbReference>
<dbReference type="Gene3D" id="1.10.8.270">
    <property type="entry name" value="putative rabgap domain of human tbc1 domain family member 14 like domains"/>
    <property type="match status" value="1"/>
</dbReference>
<dbReference type="Gene3D" id="1.10.10.750">
    <property type="entry name" value="Ypt/Rab-GAP domain of gyp1p, domain 1"/>
    <property type="match status" value="1"/>
</dbReference>
<dbReference type="Gene3D" id="1.10.472.80">
    <property type="entry name" value="Ypt/Rab-GAP domain of gyp1p, domain 3"/>
    <property type="match status" value="1"/>
</dbReference>
<dbReference type="InterPro" id="IPR000195">
    <property type="entry name" value="Rab-GAP-TBC_dom"/>
</dbReference>
<dbReference type="InterPro" id="IPR035969">
    <property type="entry name" value="Rab-GAP_TBC_sf"/>
</dbReference>
<dbReference type="InterPro" id="IPR050302">
    <property type="entry name" value="Rab_GAP_TBC_domain"/>
</dbReference>
<dbReference type="PANTHER" id="PTHR47219">
    <property type="entry name" value="RAB GTPASE-ACTIVATING PROTEIN 1-LIKE"/>
    <property type="match status" value="1"/>
</dbReference>
<dbReference type="PANTHER" id="PTHR47219:SF25">
    <property type="entry name" value="RAB-GAP TBC DOMAIN-CONTAINING PROTEIN"/>
    <property type="match status" value="1"/>
</dbReference>
<dbReference type="Pfam" id="PF00566">
    <property type="entry name" value="RabGAP-TBC"/>
    <property type="match status" value="1"/>
</dbReference>
<dbReference type="SMART" id="SM00164">
    <property type="entry name" value="TBC"/>
    <property type="match status" value="1"/>
</dbReference>
<dbReference type="SUPFAM" id="SSF47923">
    <property type="entry name" value="Ypt/Rab-GAP domain of gyp1p"/>
    <property type="match status" value="1"/>
</dbReference>
<dbReference type="PROSITE" id="PS50086">
    <property type="entry name" value="TBC_RABGAP"/>
    <property type="match status" value="1"/>
</dbReference>
<protein>
    <recommendedName>
        <fullName>TBC1 domain family member 3</fullName>
    </recommendedName>
    <alternativeName>
        <fullName>Prostate cancer gene 17 protein</fullName>
    </alternativeName>
    <alternativeName>
        <fullName>Protein TRE17-alpha</fullName>
    </alternativeName>
    <alternativeName>
        <fullName>Rab GTPase-activating protein PRC17</fullName>
    </alternativeName>
</protein>
<comment type="function">
    <text evidence="3">Acts as a GTPase activating protein for RAB5. Does not act on RAB4 or RAB11.</text>
</comment>
<comment type="subcellular location">
    <subcellularLocation>
        <location evidence="6">Cell membrane</location>
        <topology evidence="6">Lipid-anchor</topology>
    </subcellularLocation>
    <text>Associated with lipid rafts.</text>
</comment>
<comment type="alternative products">
    <event type="alternative splicing"/>
    <isoform>
        <id>Q8IZP1-1</id>
        <name>1</name>
        <sequence type="displayed"/>
    </isoform>
    <isoform>
        <id>Q8IZP1-2</id>
        <name>2</name>
        <sequence type="described" ref="VSP_056829 VSP_056830"/>
    </isoform>
</comment>
<comment type="tissue specificity">
    <text evidence="3 4">Expressed in liver, skeletal muscle, kidney, pancreas, spleen, testis, ovary, small intestine and peripheral blood leukocytes. Overexpressed in prostate cancers.</text>
</comment>
<comment type="PTM">
    <text evidence="6">Ubiquitinated by a CUL7-based E3 ligase, which leads to proteasomal degradation.</text>
</comment>
<comment type="PTM">
    <text evidence="6">Palmitoylation is required for membrane localization and protects TBC1D3 from ubiquitination.</text>
</comment>
<comment type="miscellaneous">
    <text>TBC1D3 is encoded by a collection of very similar paralogs with multiple copies of each paralog, some human genomes encoding well over 50 copies depending on ethnic origin of the donor.</text>
</comment>